<gene>
    <name type="primary">CALR</name>
    <name type="ORF">QtsA-17783</name>
</gene>
<name>CALR_MACFA</name>
<feature type="signal peptide" evidence="1">
    <location>
        <begin position="1"/>
        <end position="17"/>
    </location>
</feature>
<feature type="chain" id="PRO_0000246153" description="Calreticulin">
    <location>
        <begin position="18"/>
        <end position="417"/>
    </location>
</feature>
<feature type="repeat" description="1-1">
    <location>
        <begin position="191"/>
        <end position="202"/>
    </location>
</feature>
<feature type="repeat" description="1-2">
    <location>
        <begin position="210"/>
        <end position="221"/>
    </location>
</feature>
<feature type="repeat" description="1-3">
    <location>
        <begin position="227"/>
        <end position="238"/>
    </location>
</feature>
<feature type="repeat" description="1-4">
    <location>
        <begin position="244"/>
        <end position="255"/>
    </location>
</feature>
<feature type="repeat" description="2-1">
    <location>
        <begin position="259"/>
        <end position="269"/>
    </location>
</feature>
<feature type="repeat" description="2-2">
    <location>
        <begin position="273"/>
        <end position="283"/>
    </location>
</feature>
<feature type="repeat" description="2-3">
    <location>
        <begin position="287"/>
        <end position="297"/>
    </location>
</feature>
<feature type="region of interest" description="N-domain">
    <location>
        <begin position="18"/>
        <end position="197"/>
    </location>
</feature>
<feature type="region of interest" description="4 X approximate repeats">
    <location>
        <begin position="191"/>
        <end position="255"/>
    </location>
</feature>
<feature type="region of interest" description="Disordered" evidence="8">
    <location>
        <begin position="193"/>
        <end position="278"/>
    </location>
</feature>
<feature type="region of interest" description="P-domain">
    <location>
        <begin position="198"/>
        <end position="308"/>
    </location>
</feature>
<feature type="region of interest" description="Interaction with PPIB" evidence="1">
    <location>
        <begin position="237"/>
        <end position="270"/>
    </location>
</feature>
<feature type="region of interest" description="3 X approximate repeats">
    <location>
        <begin position="259"/>
        <end position="297"/>
    </location>
</feature>
<feature type="region of interest" description="C-domain">
    <location>
        <begin position="309"/>
        <end position="417"/>
    </location>
</feature>
<feature type="region of interest" description="Disordered" evidence="8">
    <location>
        <begin position="350"/>
        <end position="417"/>
    </location>
</feature>
<feature type="short sequence motif" description="Prevents secretion from ER" evidence="7">
    <location>
        <begin position="414"/>
        <end position="417"/>
    </location>
</feature>
<feature type="compositionally biased region" description="Basic and acidic residues" evidence="8">
    <location>
        <begin position="207"/>
        <end position="251"/>
    </location>
</feature>
<feature type="compositionally biased region" description="Acidic residues" evidence="8">
    <location>
        <begin position="252"/>
        <end position="261"/>
    </location>
</feature>
<feature type="compositionally biased region" description="Basic and acidic residues" evidence="8">
    <location>
        <begin position="352"/>
        <end position="379"/>
    </location>
</feature>
<feature type="compositionally biased region" description="Acidic residues" evidence="8">
    <location>
        <begin position="380"/>
        <end position="409"/>
    </location>
</feature>
<feature type="binding site" evidence="1">
    <location>
        <position position="26"/>
    </location>
    <ligand>
        <name>Ca(2+)</name>
        <dbReference type="ChEBI" id="CHEBI:29108"/>
    </ligand>
</feature>
<feature type="binding site" evidence="1">
    <location>
        <position position="62"/>
    </location>
    <ligand>
        <name>Ca(2+)</name>
        <dbReference type="ChEBI" id="CHEBI:29108"/>
    </ligand>
</feature>
<feature type="binding site" evidence="1">
    <location>
        <position position="64"/>
    </location>
    <ligand>
        <name>Ca(2+)</name>
        <dbReference type="ChEBI" id="CHEBI:29108"/>
    </ligand>
</feature>
<feature type="binding site" evidence="2">
    <location>
        <position position="109"/>
    </location>
    <ligand>
        <name>an alpha-D-glucoside</name>
        <dbReference type="ChEBI" id="CHEBI:22390"/>
    </ligand>
</feature>
<feature type="binding site" evidence="2">
    <location>
        <position position="111"/>
    </location>
    <ligand>
        <name>an alpha-D-glucoside</name>
        <dbReference type="ChEBI" id="CHEBI:22390"/>
    </ligand>
</feature>
<feature type="binding site" evidence="2">
    <location>
        <position position="128"/>
    </location>
    <ligand>
        <name>an alpha-D-glucoside</name>
        <dbReference type="ChEBI" id="CHEBI:22390"/>
    </ligand>
</feature>
<feature type="binding site" evidence="2">
    <location>
        <position position="135"/>
    </location>
    <ligand>
        <name>an alpha-D-glucoside</name>
        <dbReference type="ChEBI" id="CHEBI:22390"/>
    </ligand>
</feature>
<feature type="binding site" evidence="2">
    <location>
        <position position="317"/>
    </location>
    <ligand>
        <name>an alpha-D-glucoside</name>
        <dbReference type="ChEBI" id="CHEBI:22390"/>
    </ligand>
</feature>
<feature type="binding site" evidence="1">
    <location>
        <position position="328"/>
    </location>
    <ligand>
        <name>Ca(2+)</name>
        <dbReference type="ChEBI" id="CHEBI:29108"/>
    </ligand>
</feature>
<feature type="modified residue" description="N6-acetyllysine" evidence="4">
    <location>
        <position position="48"/>
    </location>
</feature>
<feature type="modified residue" description="N6-(2-hydroxyisobutyryl)lysine" evidence="4">
    <location>
        <position position="64"/>
    </location>
</feature>
<feature type="modified residue" description="N6-acetyllysine" evidence="4">
    <location>
        <position position="159"/>
    </location>
</feature>
<feature type="modified residue" description="N6-acetyllysine" evidence="4">
    <location>
        <position position="209"/>
    </location>
</feature>
<feature type="disulfide bond" evidence="1">
    <location>
        <begin position="105"/>
        <end position="137"/>
    </location>
</feature>
<reference key="1">
    <citation type="submission" date="2005-06" db="EMBL/GenBank/DDBJ databases">
        <title>DNA sequences of macaque genes expressed in brain or testis and its evolutionary implications.</title>
        <authorList>
            <consortium name="International consortium for macaque cDNA sequencing and analysis"/>
        </authorList>
    </citation>
    <scope>NUCLEOTIDE SEQUENCE [LARGE SCALE MRNA]</scope>
    <source>
        <tissue>Testis</tissue>
    </source>
</reference>
<protein>
    <recommendedName>
        <fullName>Calreticulin</fullName>
    </recommendedName>
</protein>
<comment type="function">
    <text evidence="4 5 6">Calcium-binding chaperone that promotes folding, oligomeric assembly and quality control in the endoplasmic reticulum (ER) via the calreticulin/calnexin cycle. This lectin interacts transiently with almost all of the monoglucosylated glycoproteins that are synthesized in the ER. Interacts with the DNA-binding domain of NR3C1 and mediates its nuclear export (By similarity). Involved in maternal gene expression regulation. May participate in oocyte maturation via the regulation of calcium homeostasis (By similarity). Present in the cortical granules of non-activated oocytes, is exocytosed during the cortical reaction in response to oocyte activation and might participate in the block to polyspermy (By similarity).</text>
</comment>
<comment type="subunit">
    <text evidence="2 3 4">Monomer. Component of an EIF2 complex at least composed of CELF1/CUGBP1, CALR, CALR3, EIF2S1, EIF2S2, HSP90B1 and HSPA5. Interacts with PDIA3/ERp57 and SPACA9 (By similarity). Interacts with TRIM21. Interacts with NR3C1. Interacts with PPIB. Interacts (via P-domain) with PDIA5. Interacts with CLCC1 (By similarity).</text>
</comment>
<comment type="subcellular location">
    <subcellularLocation>
        <location evidence="4">Endoplasmic reticulum lumen</location>
    </subcellularLocation>
    <subcellularLocation>
        <location evidence="4">Cytoplasm</location>
        <location evidence="4">Cytosol</location>
    </subcellularLocation>
    <subcellularLocation>
        <location evidence="4">Secreted</location>
        <location evidence="4">Extracellular space</location>
        <location evidence="4">Extracellular matrix</location>
    </subcellularLocation>
    <subcellularLocation>
        <location evidence="4">Cell surface</location>
    </subcellularLocation>
    <subcellularLocation>
        <location evidence="5">Sarcoplasmic reticulum lumen</location>
    </subcellularLocation>
    <subcellularLocation>
        <location evidence="6">Cytoplasmic vesicle</location>
        <location evidence="6">Secretory vesicle</location>
        <location evidence="6">Cortical granule</location>
    </subcellularLocation>
    <subcellularLocation>
        <location evidence="4">Cytolytic granule</location>
    </subcellularLocation>
    <text evidence="4 5 6">Also found in cell surface (T cells), cytosol and extracellular matrix. During oocyte maturation and after parthenogenetic activation accumulates in cortical granules. In pronuclear and early cleaved embryos localizes weakly to cytoplasm around nucleus and more strongly in the region near the cortex (By similarity). In cortical granules of non-activated oocytes, is exocytosed during the cortical reaction in response to oocyte activation (By similarity).</text>
</comment>
<comment type="domain">
    <text evidence="1">Can be divided into a N-terminal globular domain, a proline-rich P-domain forming an elongated arm-like structure and a C-terminal acidic domain. The P-domain binds one molecule of calcium with high affinity, whereas the acidic C-domain binds multiple calcium ions with low affinity (By similarity).</text>
</comment>
<comment type="domain">
    <text evidence="1">The interaction with glycans occurs through a binding site in the globular lectin domain.</text>
</comment>
<comment type="domain">
    <text evidence="1">The zinc binding sites are localized to the N-domain.</text>
</comment>
<comment type="domain">
    <text evidence="1">Associates with PDIA3 through the tip of the extended arm formed by the P-domain.</text>
</comment>
<comment type="similarity">
    <text evidence="9">Belongs to the calreticulin family.</text>
</comment>
<keyword id="KW-0007">Acetylation</keyword>
<keyword id="KW-0106">Calcium</keyword>
<keyword id="KW-0143">Chaperone</keyword>
<keyword id="KW-0963">Cytoplasm</keyword>
<keyword id="KW-0968">Cytoplasmic vesicle</keyword>
<keyword id="KW-1015">Disulfide bond</keyword>
<keyword id="KW-0256">Endoplasmic reticulum</keyword>
<keyword id="KW-0272">Extracellular matrix</keyword>
<keyword id="KW-0379">Hydroxylation</keyword>
<keyword id="KW-0430">Lectin</keyword>
<keyword id="KW-0458">Lysosome</keyword>
<keyword id="KW-0479">Metal-binding</keyword>
<keyword id="KW-1185">Reference proteome</keyword>
<keyword id="KW-0677">Repeat</keyword>
<keyword id="KW-0703">Sarcoplasmic reticulum</keyword>
<keyword id="KW-0964">Secreted</keyword>
<keyword id="KW-0732">Signal</keyword>
<keyword id="KW-0862">Zinc</keyword>
<proteinExistence type="evidence at transcript level"/>
<dbReference type="EMBL" id="AB169175">
    <property type="protein sequence ID" value="BAE01267.1"/>
    <property type="molecule type" value="mRNA"/>
</dbReference>
<dbReference type="RefSeq" id="NP_001274539.1">
    <property type="nucleotide sequence ID" value="NM_001287610.1"/>
</dbReference>
<dbReference type="RefSeq" id="XP_045236085.1">
    <property type="nucleotide sequence ID" value="XM_045380150.2"/>
</dbReference>
<dbReference type="SMR" id="Q4R6K8"/>
<dbReference type="STRING" id="9541.ENSMFAP00000000792"/>
<dbReference type="Ensembl" id="ENSMFAT00000099816.1">
    <property type="protein sequence ID" value="ENSMFAP00000046326.1"/>
    <property type="gene ID" value="ENSMFAG00000040740.2"/>
</dbReference>
<dbReference type="GeneID" id="102121336"/>
<dbReference type="VEuPathDB" id="HostDB:ENSMFAG00000040740"/>
<dbReference type="eggNOG" id="KOG0674">
    <property type="taxonomic scope" value="Eukaryota"/>
</dbReference>
<dbReference type="GeneTree" id="ENSGT00950000182915"/>
<dbReference type="OMA" id="KRDEICA"/>
<dbReference type="Proteomes" id="UP000233100">
    <property type="component" value="Chromosome 19"/>
</dbReference>
<dbReference type="Bgee" id="ENSMFAG00000040740">
    <property type="expression patterns" value="Expressed in pituitary gland and 13 other cell types or tissues"/>
</dbReference>
<dbReference type="GO" id="GO:0009986">
    <property type="term" value="C:cell surface"/>
    <property type="evidence" value="ECO:0007669"/>
    <property type="project" value="UniProtKB-SubCell"/>
</dbReference>
<dbReference type="GO" id="GO:0060473">
    <property type="term" value="C:cortical granule"/>
    <property type="evidence" value="ECO:0000250"/>
    <property type="project" value="UniProtKB"/>
</dbReference>
<dbReference type="GO" id="GO:0044194">
    <property type="term" value="C:cytolytic granule"/>
    <property type="evidence" value="ECO:0007669"/>
    <property type="project" value="UniProtKB-SubCell"/>
</dbReference>
<dbReference type="GO" id="GO:0005829">
    <property type="term" value="C:cytosol"/>
    <property type="evidence" value="ECO:0007669"/>
    <property type="project" value="UniProtKB-SubCell"/>
</dbReference>
<dbReference type="GO" id="GO:0005789">
    <property type="term" value="C:endoplasmic reticulum membrane"/>
    <property type="evidence" value="ECO:0007669"/>
    <property type="project" value="TreeGrafter"/>
</dbReference>
<dbReference type="GO" id="GO:0005576">
    <property type="term" value="C:extracellular region"/>
    <property type="evidence" value="ECO:0007669"/>
    <property type="project" value="UniProtKB-KW"/>
</dbReference>
<dbReference type="GO" id="GO:0033018">
    <property type="term" value="C:sarcoplasmic reticulum lumen"/>
    <property type="evidence" value="ECO:0007669"/>
    <property type="project" value="UniProtKB-SubCell"/>
</dbReference>
<dbReference type="GO" id="GO:0005509">
    <property type="term" value="F:calcium ion binding"/>
    <property type="evidence" value="ECO:0000250"/>
    <property type="project" value="UniProtKB"/>
</dbReference>
<dbReference type="GO" id="GO:0030246">
    <property type="term" value="F:carbohydrate binding"/>
    <property type="evidence" value="ECO:0007669"/>
    <property type="project" value="UniProtKB-KW"/>
</dbReference>
<dbReference type="GO" id="GO:0051082">
    <property type="term" value="F:unfolded protein binding"/>
    <property type="evidence" value="ECO:0007669"/>
    <property type="project" value="InterPro"/>
</dbReference>
<dbReference type="GO" id="GO:0036503">
    <property type="term" value="P:ERAD pathway"/>
    <property type="evidence" value="ECO:0007669"/>
    <property type="project" value="TreeGrafter"/>
</dbReference>
<dbReference type="GO" id="GO:0006457">
    <property type="term" value="P:protein folding"/>
    <property type="evidence" value="ECO:0007669"/>
    <property type="project" value="InterPro"/>
</dbReference>
<dbReference type="GO" id="GO:0050821">
    <property type="term" value="P:protein stabilization"/>
    <property type="evidence" value="ECO:0000250"/>
    <property type="project" value="UniProtKB"/>
</dbReference>
<dbReference type="FunFam" id="2.10.250.10:FF:000002">
    <property type="entry name" value="Calreticulin"/>
    <property type="match status" value="1"/>
</dbReference>
<dbReference type="FunFam" id="2.60.120.200:FF:000113">
    <property type="entry name" value="Calreticulin 3"/>
    <property type="match status" value="1"/>
</dbReference>
<dbReference type="FunFam" id="2.60.120.200:FF:000122">
    <property type="entry name" value="Calreticulin 3"/>
    <property type="match status" value="1"/>
</dbReference>
<dbReference type="Gene3D" id="2.60.120.200">
    <property type="match status" value="1"/>
</dbReference>
<dbReference type="Gene3D" id="2.10.250.10">
    <property type="entry name" value="Calreticulin/calnexin, P domain"/>
    <property type="match status" value="1"/>
</dbReference>
<dbReference type="InterPro" id="IPR001580">
    <property type="entry name" value="Calret/calnex"/>
</dbReference>
<dbReference type="InterPro" id="IPR018124">
    <property type="entry name" value="Calret/calnex_CS"/>
</dbReference>
<dbReference type="InterPro" id="IPR009169">
    <property type="entry name" value="Calreticulin"/>
</dbReference>
<dbReference type="InterPro" id="IPR009033">
    <property type="entry name" value="Calreticulin/calnexin_P_dom_sf"/>
</dbReference>
<dbReference type="InterPro" id="IPR013320">
    <property type="entry name" value="ConA-like_dom_sf"/>
</dbReference>
<dbReference type="PANTHER" id="PTHR11073:SF16">
    <property type="entry name" value="CALRETICULIN"/>
    <property type="match status" value="1"/>
</dbReference>
<dbReference type="PANTHER" id="PTHR11073">
    <property type="entry name" value="CALRETICULIN AND CALNEXIN"/>
    <property type="match status" value="1"/>
</dbReference>
<dbReference type="Pfam" id="PF00262">
    <property type="entry name" value="Calreticulin"/>
    <property type="match status" value="2"/>
</dbReference>
<dbReference type="PIRSF" id="PIRSF002356">
    <property type="entry name" value="Calreticulin"/>
    <property type="match status" value="1"/>
</dbReference>
<dbReference type="PRINTS" id="PR00626">
    <property type="entry name" value="CALRETICULIN"/>
</dbReference>
<dbReference type="SUPFAM" id="SSF49899">
    <property type="entry name" value="Concanavalin A-like lectins/glucanases"/>
    <property type="match status" value="1"/>
</dbReference>
<dbReference type="SUPFAM" id="SSF63887">
    <property type="entry name" value="P-domain of calnexin/calreticulin"/>
    <property type="match status" value="1"/>
</dbReference>
<dbReference type="PROSITE" id="PS00803">
    <property type="entry name" value="CALRETICULIN_1"/>
    <property type="match status" value="1"/>
</dbReference>
<dbReference type="PROSITE" id="PS00804">
    <property type="entry name" value="CALRETICULIN_2"/>
    <property type="match status" value="1"/>
</dbReference>
<dbReference type="PROSITE" id="PS00805">
    <property type="entry name" value="CALRETICULIN_REPEAT"/>
    <property type="match status" value="3"/>
</dbReference>
<dbReference type="PROSITE" id="PS00014">
    <property type="entry name" value="ER_TARGET"/>
    <property type="match status" value="1"/>
</dbReference>
<accession>Q4R6K8</accession>
<evidence type="ECO:0000250" key="1"/>
<evidence type="ECO:0000250" key="2">
    <source>
        <dbReference type="UniProtKB" id="P14211"/>
    </source>
</evidence>
<evidence type="ECO:0000250" key="3">
    <source>
        <dbReference type="UniProtKB" id="P18418"/>
    </source>
</evidence>
<evidence type="ECO:0000250" key="4">
    <source>
        <dbReference type="UniProtKB" id="P27797"/>
    </source>
</evidence>
<evidence type="ECO:0000250" key="5">
    <source>
        <dbReference type="UniProtKB" id="P28491"/>
    </source>
</evidence>
<evidence type="ECO:0000250" key="6">
    <source>
        <dbReference type="UniProtKB" id="Q8K3H7"/>
    </source>
</evidence>
<evidence type="ECO:0000255" key="7">
    <source>
        <dbReference type="PROSITE-ProRule" id="PRU10138"/>
    </source>
</evidence>
<evidence type="ECO:0000256" key="8">
    <source>
        <dbReference type="SAM" id="MobiDB-lite"/>
    </source>
</evidence>
<evidence type="ECO:0000305" key="9"/>
<organism>
    <name type="scientific">Macaca fascicularis</name>
    <name type="common">Crab-eating macaque</name>
    <name type="synonym">Cynomolgus monkey</name>
    <dbReference type="NCBI Taxonomy" id="9541"/>
    <lineage>
        <taxon>Eukaryota</taxon>
        <taxon>Metazoa</taxon>
        <taxon>Chordata</taxon>
        <taxon>Craniata</taxon>
        <taxon>Vertebrata</taxon>
        <taxon>Euteleostomi</taxon>
        <taxon>Mammalia</taxon>
        <taxon>Eutheria</taxon>
        <taxon>Euarchontoglires</taxon>
        <taxon>Primates</taxon>
        <taxon>Haplorrhini</taxon>
        <taxon>Catarrhini</taxon>
        <taxon>Cercopithecidae</taxon>
        <taxon>Cercopithecinae</taxon>
        <taxon>Macaca</taxon>
    </lineage>
</organism>
<sequence length="417" mass="48114">MLLSVPLLLGLLGLAAAEPAVYFKEQFLDGDGWTSRWIESKHKSDFGKFVLSSGKFYGDEEKDKGLQTSQDARFYALSASFEPFSNKGQTLVVQFTVKHEQNIDCGGGYVKLFPNSLDQTDMHGDSEYNIMFGPDICGPGTKKVHVIFNYKGKNVLINKDIRCKDDEFTHLYTLIVRPDNTYEVKIDNSQVESGSLEDDWDFLPPKKIKDPDASKPEDWDERAKIDDPTDSKPEDWDKPEHIPDPDAKKPEDWDEEMDGEWEPPVIQNPEYKGEWKPRQIDNPDYKGTWIHPEIDNPEYSPDPSIYAYDNFGVLGLDLWQVKSGTIFDNFLITNDEAYAEEFGNETWGVTKAAEKQMKDKQDEEQRLKEEEEDKKRKEEEEAEDKEDDEDKDEDEEDEEDKEEDEEEDVPGQAKDEL</sequence>